<name>TRPC_MYCS2</name>
<protein>
    <recommendedName>
        <fullName evidence="1">Indole-3-glycerol phosphate synthase</fullName>
        <shortName evidence="1">IGPS</shortName>
        <ecNumber evidence="1">4.1.1.48</ecNumber>
    </recommendedName>
</protein>
<comment type="catalytic activity">
    <reaction evidence="1">
        <text>1-(2-carboxyphenylamino)-1-deoxy-D-ribulose 5-phosphate + H(+) = (1S,2R)-1-C-(indol-3-yl)glycerol 3-phosphate + CO2 + H2O</text>
        <dbReference type="Rhea" id="RHEA:23476"/>
        <dbReference type="ChEBI" id="CHEBI:15377"/>
        <dbReference type="ChEBI" id="CHEBI:15378"/>
        <dbReference type="ChEBI" id="CHEBI:16526"/>
        <dbReference type="ChEBI" id="CHEBI:58613"/>
        <dbReference type="ChEBI" id="CHEBI:58866"/>
        <dbReference type="EC" id="4.1.1.48"/>
    </reaction>
</comment>
<comment type="pathway">
    <text evidence="1">Amino-acid biosynthesis; L-tryptophan biosynthesis; L-tryptophan from chorismate: step 4/5.</text>
</comment>
<comment type="similarity">
    <text evidence="1">Belongs to the TrpC family.</text>
</comment>
<organism>
    <name type="scientific">Mycolicibacterium smegmatis (strain ATCC 700084 / mc(2)155)</name>
    <name type="common">Mycobacterium smegmatis</name>
    <dbReference type="NCBI Taxonomy" id="246196"/>
    <lineage>
        <taxon>Bacteria</taxon>
        <taxon>Bacillati</taxon>
        <taxon>Actinomycetota</taxon>
        <taxon>Actinomycetes</taxon>
        <taxon>Mycobacteriales</taxon>
        <taxon>Mycobacteriaceae</taxon>
        <taxon>Mycolicibacterium</taxon>
    </lineage>
</organism>
<proteinExistence type="evidence at protein level"/>
<accession>A0QX95</accession>
<accession>I7G8S9</accession>
<dbReference type="EC" id="4.1.1.48" evidence="1"/>
<dbReference type="EMBL" id="CP000480">
    <property type="protein sequence ID" value="ABK74351.1"/>
    <property type="molecule type" value="Genomic_DNA"/>
</dbReference>
<dbReference type="EMBL" id="CP001663">
    <property type="protein sequence ID" value="AFP39601.1"/>
    <property type="molecule type" value="Genomic_DNA"/>
</dbReference>
<dbReference type="RefSeq" id="WP_003894608.1">
    <property type="nucleotide sequence ID" value="NZ_SIJM01000015.1"/>
</dbReference>
<dbReference type="RefSeq" id="YP_887533.1">
    <property type="nucleotide sequence ID" value="NC_008596.1"/>
</dbReference>
<dbReference type="SMR" id="A0QX95"/>
<dbReference type="STRING" id="246196.MSMEG_3219"/>
<dbReference type="PaxDb" id="246196-MSMEI_3137"/>
<dbReference type="GeneID" id="93457988"/>
<dbReference type="KEGG" id="msb:LJ00_16005"/>
<dbReference type="KEGG" id="msg:MSMEI_3137"/>
<dbReference type="KEGG" id="msm:MSMEG_3219"/>
<dbReference type="PATRIC" id="fig|246196.19.peg.3181"/>
<dbReference type="eggNOG" id="COG0134">
    <property type="taxonomic scope" value="Bacteria"/>
</dbReference>
<dbReference type="OrthoDB" id="9804217at2"/>
<dbReference type="UniPathway" id="UPA00035">
    <property type="reaction ID" value="UER00043"/>
</dbReference>
<dbReference type="Proteomes" id="UP000000757">
    <property type="component" value="Chromosome"/>
</dbReference>
<dbReference type="Proteomes" id="UP000006158">
    <property type="component" value="Chromosome"/>
</dbReference>
<dbReference type="GO" id="GO:0004425">
    <property type="term" value="F:indole-3-glycerol-phosphate synthase activity"/>
    <property type="evidence" value="ECO:0007669"/>
    <property type="project" value="UniProtKB-UniRule"/>
</dbReference>
<dbReference type="GO" id="GO:0004640">
    <property type="term" value="F:phosphoribosylanthranilate isomerase activity"/>
    <property type="evidence" value="ECO:0007669"/>
    <property type="project" value="TreeGrafter"/>
</dbReference>
<dbReference type="GO" id="GO:0000162">
    <property type="term" value="P:L-tryptophan biosynthetic process"/>
    <property type="evidence" value="ECO:0007669"/>
    <property type="project" value="UniProtKB-UniRule"/>
</dbReference>
<dbReference type="CDD" id="cd00331">
    <property type="entry name" value="IGPS"/>
    <property type="match status" value="1"/>
</dbReference>
<dbReference type="FunFam" id="3.20.20.70:FF:000024">
    <property type="entry name" value="Indole-3-glycerol phosphate synthase"/>
    <property type="match status" value="1"/>
</dbReference>
<dbReference type="Gene3D" id="3.20.20.70">
    <property type="entry name" value="Aldolase class I"/>
    <property type="match status" value="1"/>
</dbReference>
<dbReference type="HAMAP" id="MF_00134_A">
    <property type="entry name" value="IGPS_A"/>
    <property type="match status" value="1"/>
</dbReference>
<dbReference type="HAMAP" id="MF_00134_B">
    <property type="entry name" value="IGPS_B"/>
    <property type="match status" value="1"/>
</dbReference>
<dbReference type="InterPro" id="IPR013785">
    <property type="entry name" value="Aldolase_TIM"/>
</dbReference>
<dbReference type="InterPro" id="IPR045186">
    <property type="entry name" value="Indole-3-glycerol_P_synth"/>
</dbReference>
<dbReference type="InterPro" id="IPR013798">
    <property type="entry name" value="Indole-3-glycerol_P_synth_dom"/>
</dbReference>
<dbReference type="InterPro" id="IPR001468">
    <property type="entry name" value="Indole-3-GlycerolPSynthase_CS"/>
</dbReference>
<dbReference type="InterPro" id="IPR011060">
    <property type="entry name" value="RibuloseP-bd_barrel"/>
</dbReference>
<dbReference type="NCBIfam" id="NF001369">
    <property type="entry name" value="PRK00278.1-1"/>
    <property type="match status" value="1"/>
</dbReference>
<dbReference type="NCBIfam" id="NF001377">
    <property type="entry name" value="PRK00278.2-4"/>
    <property type="match status" value="1"/>
</dbReference>
<dbReference type="PANTHER" id="PTHR22854:SF2">
    <property type="entry name" value="INDOLE-3-GLYCEROL-PHOSPHATE SYNTHASE"/>
    <property type="match status" value="1"/>
</dbReference>
<dbReference type="PANTHER" id="PTHR22854">
    <property type="entry name" value="TRYPTOPHAN BIOSYNTHESIS PROTEIN"/>
    <property type="match status" value="1"/>
</dbReference>
<dbReference type="Pfam" id="PF00218">
    <property type="entry name" value="IGPS"/>
    <property type="match status" value="1"/>
</dbReference>
<dbReference type="SUPFAM" id="SSF51366">
    <property type="entry name" value="Ribulose-phoshate binding barrel"/>
    <property type="match status" value="1"/>
</dbReference>
<dbReference type="PROSITE" id="PS00614">
    <property type="entry name" value="IGPS"/>
    <property type="match status" value="1"/>
</dbReference>
<evidence type="ECO:0000255" key="1">
    <source>
        <dbReference type="HAMAP-Rule" id="MF_00134"/>
    </source>
</evidence>
<evidence type="ECO:0000269" key="2">
    <source>
    </source>
</evidence>
<keyword id="KW-0028">Amino-acid biosynthesis</keyword>
<keyword id="KW-0057">Aromatic amino acid biosynthesis</keyword>
<keyword id="KW-0210">Decarboxylase</keyword>
<keyword id="KW-0456">Lyase</keyword>
<keyword id="KW-1185">Reference proteome</keyword>
<keyword id="KW-0822">Tryptophan biosynthesis</keyword>
<feature type="initiator methionine" description="Removed" evidence="2">
    <location>
        <position position="1"/>
    </location>
</feature>
<feature type="chain" id="PRO_1000018501" description="Indole-3-glycerol phosphate synthase">
    <location>
        <begin position="2"/>
        <end position="272"/>
    </location>
</feature>
<reference key="1">
    <citation type="submission" date="2006-10" db="EMBL/GenBank/DDBJ databases">
        <authorList>
            <person name="Fleischmann R.D."/>
            <person name="Dodson R.J."/>
            <person name="Haft D.H."/>
            <person name="Merkel J.S."/>
            <person name="Nelson W.C."/>
            <person name="Fraser C.M."/>
        </authorList>
    </citation>
    <scope>NUCLEOTIDE SEQUENCE [LARGE SCALE GENOMIC DNA]</scope>
    <source>
        <strain>ATCC 700084 / mc(2)155</strain>
    </source>
</reference>
<reference key="2">
    <citation type="journal article" date="2007" name="Genome Biol.">
        <title>Interrupted coding sequences in Mycobacterium smegmatis: authentic mutations or sequencing errors?</title>
        <authorList>
            <person name="Deshayes C."/>
            <person name="Perrodou E."/>
            <person name="Gallien S."/>
            <person name="Euphrasie D."/>
            <person name="Schaeffer C."/>
            <person name="Van-Dorsselaer A."/>
            <person name="Poch O."/>
            <person name="Lecompte O."/>
            <person name="Reyrat J.-M."/>
        </authorList>
    </citation>
    <scope>NUCLEOTIDE SEQUENCE [LARGE SCALE GENOMIC DNA]</scope>
    <source>
        <strain>ATCC 700084 / mc(2)155</strain>
    </source>
</reference>
<reference key="3">
    <citation type="journal article" date="2009" name="Genome Res.">
        <title>Ortho-proteogenomics: multiple proteomes investigation through orthology and a new MS-based protocol.</title>
        <authorList>
            <person name="Gallien S."/>
            <person name="Perrodou E."/>
            <person name="Carapito C."/>
            <person name="Deshayes C."/>
            <person name="Reyrat J.-M."/>
            <person name="Van Dorsselaer A."/>
            <person name="Poch O."/>
            <person name="Schaeffer C."/>
            <person name="Lecompte O."/>
        </authorList>
    </citation>
    <scope>NUCLEOTIDE SEQUENCE [LARGE SCALE GENOMIC DNA]</scope>
    <scope>IDENTIFICATION BY MASS SPECTROMETRY [LARGE SCALE ANALYSIS]</scope>
    <scope>CLEAVAGE OF INITIATOR METHIONINE</scope>
    <source>
        <strain>ATCC 700084 / mc(2)155</strain>
    </source>
</reference>
<gene>
    <name evidence="1" type="primary">trpC</name>
    <name type="ordered locus">MSMEG_3219</name>
    <name type="ordered locus">MSMEI_3137</name>
</gene>
<sequence length="272" mass="28370">MSSATVLDSIIEGVRADVAAREAVISLDEIKERAKAAPPPLNVMAALREPGIGVIAEVKRASPSRGALASIGDPAELAQAYQDGGARVISVLTEQRRFNGSLDDLDAVRAAVSIPVLRKDFIVRPYQIHEARAHGADMLLLIVAALDQPVLESLLERTESLGMTALVEVHTEEEADRALKAGASVIGVNARDLKTLEVDRTVFSRIAPGLPSNVIRVAESGVRGTADLLAYAGAGADAVLVGEGLVTSGDPRSAVADLVTAGTHPSCPKPAR</sequence>